<proteinExistence type="inferred from homology"/>
<reference key="1">
    <citation type="journal article" date="2008" name="Genomics">
        <title>Evolution in the laboratory: the genome of Halobacterium salinarum strain R1 compared to that of strain NRC-1.</title>
        <authorList>
            <person name="Pfeiffer F."/>
            <person name="Schuster S.C."/>
            <person name="Broicher A."/>
            <person name="Falb M."/>
            <person name="Palm P."/>
            <person name="Rodewald K."/>
            <person name="Ruepp A."/>
            <person name="Soppa J."/>
            <person name="Tittor J."/>
            <person name="Oesterhelt D."/>
        </authorList>
    </citation>
    <scope>NUCLEOTIDE SEQUENCE [LARGE SCALE GENOMIC DNA]</scope>
    <source>
        <strain>ATCC 29341 / DSM 671 / R1</strain>
    </source>
</reference>
<dbReference type="EMBL" id="AM774415">
    <property type="protein sequence ID" value="CAP14991.1"/>
    <property type="molecule type" value="Genomic_DNA"/>
</dbReference>
<dbReference type="SMR" id="B0R8C2"/>
<dbReference type="EnsemblBacteria" id="CAP14991">
    <property type="protein sequence ID" value="CAP14991"/>
    <property type="gene ID" value="OE_4720R"/>
</dbReference>
<dbReference type="KEGG" id="hsl:OE_4720R"/>
<dbReference type="HOGENOM" id="CLU_122625_0_1_2"/>
<dbReference type="PhylomeDB" id="B0R8C2"/>
<dbReference type="Proteomes" id="UP000001321">
    <property type="component" value="Chromosome"/>
</dbReference>
<dbReference type="GO" id="GO:0015935">
    <property type="term" value="C:small ribosomal subunit"/>
    <property type="evidence" value="ECO:0007669"/>
    <property type="project" value="InterPro"/>
</dbReference>
<dbReference type="GO" id="GO:0003735">
    <property type="term" value="F:structural constituent of ribosome"/>
    <property type="evidence" value="ECO:0007669"/>
    <property type="project" value="InterPro"/>
</dbReference>
<dbReference type="GO" id="GO:0000049">
    <property type="term" value="F:tRNA binding"/>
    <property type="evidence" value="ECO:0007669"/>
    <property type="project" value="UniProtKB-UniRule"/>
</dbReference>
<dbReference type="GO" id="GO:0006412">
    <property type="term" value="P:translation"/>
    <property type="evidence" value="ECO:0007669"/>
    <property type="project" value="UniProtKB-UniRule"/>
</dbReference>
<dbReference type="FunFam" id="3.30.70.600:FF:000004">
    <property type="entry name" value="30S ribosomal protein S10"/>
    <property type="match status" value="1"/>
</dbReference>
<dbReference type="Gene3D" id="3.30.70.600">
    <property type="entry name" value="Ribosomal protein S10 domain"/>
    <property type="match status" value="1"/>
</dbReference>
<dbReference type="HAMAP" id="MF_00508">
    <property type="entry name" value="Ribosomal_uS10"/>
    <property type="match status" value="1"/>
</dbReference>
<dbReference type="InterPro" id="IPR001848">
    <property type="entry name" value="Ribosomal_uS10"/>
</dbReference>
<dbReference type="InterPro" id="IPR018268">
    <property type="entry name" value="Ribosomal_uS10_CS"/>
</dbReference>
<dbReference type="InterPro" id="IPR027486">
    <property type="entry name" value="Ribosomal_uS10_dom"/>
</dbReference>
<dbReference type="InterPro" id="IPR036838">
    <property type="entry name" value="Ribosomal_uS10_dom_sf"/>
</dbReference>
<dbReference type="InterPro" id="IPR005729">
    <property type="entry name" value="Ribosomal_uS10_euk/arc"/>
</dbReference>
<dbReference type="NCBIfam" id="TIGR01046">
    <property type="entry name" value="uS10_euk_arch"/>
    <property type="match status" value="1"/>
</dbReference>
<dbReference type="PANTHER" id="PTHR11700">
    <property type="entry name" value="30S RIBOSOMAL PROTEIN S10 FAMILY MEMBER"/>
    <property type="match status" value="1"/>
</dbReference>
<dbReference type="Pfam" id="PF00338">
    <property type="entry name" value="Ribosomal_S10"/>
    <property type="match status" value="1"/>
</dbReference>
<dbReference type="PRINTS" id="PR00971">
    <property type="entry name" value="RIBOSOMALS10"/>
</dbReference>
<dbReference type="SMART" id="SM01403">
    <property type="entry name" value="Ribosomal_S10"/>
    <property type="match status" value="1"/>
</dbReference>
<dbReference type="SUPFAM" id="SSF54999">
    <property type="entry name" value="Ribosomal protein S10"/>
    <property type="match status" value="1"/>
</dbReference>
<dbReference type="PROSITE" id="PS00361">
    <property type="entry name" value="RIBOSOMAL_S10"/>
    <property type="match status" value="1"/>
</dbReference>
<protein>
    <recommendedName>
        <fullName evidence="1">Small ribosomal subunit protein uS10</fullName>
    </recommendedName>
    <alternativeName>
        <fullName evidence="3">30S ribosomal protein S10</fullName>
    </alternativeName>
</protein>
<keyword id="KW-0687">Ribonucleoprotein</keyword>
<keyword id="KW-0689">Ribosomal protein</keyword>
<comment type="function">
    <text evidence="1">Involved in the binding of tRNA to the ribosomes.</text>
</comment>
<comment type="subunit">
    <text evidence="1">Part of the 30S ribosomal subunit.</text>
</comment>
<comment type="similarity">
    <text evidence="1">Belongs to the universal ribosomal protein uS10 family.</text>
</comment>
<sequence>MQQARVRLAGVDPDDLDNICGEVQEIADKTGVKVSGPVPLPTKTLEVPSRKSPDGEGTATWEHWEMRVHKRLIDIDADERALRQLMRIQVPNDVNIEIVLED</sequence>
<name>RS10_HALS3</name>
<feature type="chain" id="PRO_1000127132" description="Small ribosomal subunit protein uS10">
    <location>
        <begin position="1"/>
        <end position="102"/>
    </location>
</feature>
<feature type="region of interest" description="Disordered" evidence="2">
    <location>
        <begin position="34"/>
        <end position="58"/>
    </location>
</feature>
<organism>
    <name type="scientific">Halobacterium salinarum (strain ATCC 29341 / DSM 671 / R1)</name>
    <dbReference type="NCBI Taxonomy" id="478009"/>
    <lineage>
        <taxon>Archaea</taxon>
        <taxon>Methanobacteriati</taxon>
        <taxon>Methanobacteriota</taxon>
        <taxon>Stenosarchaea group</taxon>
        <taxon>Halobacteria</taxon>
        <taxon>Halobacteriales</taxon>
        <taxon>Halobacteriaceae</taxon>
        <taxon>Halobacterium</taxon>
        <taxon>Halobacterium salinarum NRC-34001</taxon>
    </lineage>
</organism>
<accession>B0R8C2</accession>
<gene>
    <name evidence="1" type="primary">rps10</name>
    <name type="ordered locus">OE_4720R</name>
</gene>
<evidence type="ECO:0000255" key="1">
    <source>
        <dbReference type="HAMAP-Rule" id="MF_00508"/>
    </source>
</evidence>
<evidence type="ECO:0000256" key="2">
    <source>
        <dbReference type="SAM" id="MobiDB-lite"/>
    </source>
</evidence>
<evidence type="ECO:0000305" key="3"/>